<name>HXA5_MORSA</name>
<evidence type="ECO:0000250" key="1"/>
<evidence type="ECO:0000255" key="2">
    <source>
        <dbReference type="PROSITE-ProRule" id="PRU00108"/>
    </source>
</evidence>
<evidence type="ECO:0000256" key="3">
    <source>
        <dbReference type="SAM" id="MobiDB-lite"/>
    </source>
</evidence>
<evidence type="ECO:0000305" key="4"/>
<comment type="function">
    <text evidence="1">Sequence-specific transcription factor which is part of a developmental regulatory system that provides cells with specific positional identities on the anterior-posterior axis.</text>
</comment>
<comment type="subcellular location">
    <subcellularLocation>
        <location evidence="2">Nucleus</location>
    </subcellularLocation>
</comment>
<comment type="similarity">
    <text evidence="4">Belongs to the Antp homeobox family.</text>
</comment>
<protein>
    <recommendedName>
        <fullName>Homeobox protein Hox-A5</fullName>
    </recommendedName>
</protein>
<accession>Q9PWD3</accession>
<dbReference type="EMBL" id="AF089743">
    <property type="protein sequence ID" value="AAD46398.1"/>
    <property type="molecule type" value="Genomic_DNA"/>
</dbReference>
<dbReference type="SMR" id="Q9PWD3"/>
<dbReference type="GO" id="GO:0005634">
    <property type="term" value="C:nucleus"/>
    <property type="evidence" value="ECO:0007669"/>
    <property type="project" value="UniProtKB-SubCell"/>
</dbReference>
<dbReference type="GO" id="GO:0000981">
    <property type="term" value="F:DNA-binding transcription factor activity, RNA polymerase II-specific"/>
    <property type="evidence" value="ECO:0007669"/>
    <property type="project" value="InterPro"/>
</dbReference>
<dbReference type="GO" id="GO:0000978">
    <property type="term" value="F:RNA polymerase II cis-regulatory region sequence-specific DNA binding"/>
    <property type="evidence" value="ECO:0007669"/>
    <property type="project" value="TreeGrafter"/>
</dbReference>
<dbReference type="GO" id="GO:0009952">
    <property type="term" value="P:anterior/posterior pattern specification"/>
    <property type="evidence" value="ECO:0007669"/>
    <property type="project" value="TreeGrafter"/>
</dbReference>
<dbReference type="CDD" id="cd00086">
    <property type="entry name" value="homeodomain"/>
    <property type="match status" value="1"/>
</dbReference>
<dbReference type="FunFam" id="1.10.10.60:FF:000055">
    <property type="entry name" value="Homeobox protein Hox-A5"/>
    <property type="match status" value="1"/>
</dbReference>
<dbReference type="Gene3D" id="1.10.10.60">
    <property type="entry name" value="Homeodomain-like"/>
    <property type="match status" value="1"/>
</dbReference>
<dbReference type="InterPro" id="IPR050296">
    <property type="entry name" value="Antp_homeobox"/>
</dbReference>
<dbReference type="InterPro" id="IPR001356">
    <property type="entry name" value="HD"/>
</dbReference>
<dbReference type="InterPro" id="IPR020479">
    <property type="entry name" value="HD_metazoa"/>
</dbReference>
<dbReference type="InterPro" id="IPR017995">
    <property type="entry name" value="Homeobox_antennapedia"/>
</dbReference>
<dbReference type="InterPro" id="IPR001827">
    <property type="entry name" value="Homeobox_Antennapedia_CS"/>
</dbReference>
<dbReference type="InterPro" id="IPR017970">
    <property type="entry name" value="Homeobox_CS"/>
</dbReference>
<dbReference type="InterPro" id="IPR009057">
    <property type="entry name" value="Homeodomain-like_sf"/>
</dbReference>
<dbReference type="PANTHER" id="PTHR45659">
    <property type="entry name" value="HOMEOBOX PROTEIN HOX"/>
    <property type="match status" value="1"/>
</dbReference>
<dbReference type="PANTHER" id="PTHR45659:SF10">
    <property type="entry name" value="HOMEOBOX PROTEIN HOX-A5"/>
    <property type="match status" value="1"/>
</dbReference>
<dbReference type="Pfam" id="PF00046">
    <property type="entry name" value="Homeodomain"/>
    <property type="match status" value="1"/>
</dbReference>
<dbReference type="PRINTS" id="PR00025">
    <property type="entry name" value="ANTENNAPEDIA"/>
</dbReference>
<dbReference type="PRINTS" id="PR00024">
    <property type="entry name" value="HOMEOBOX"/>
</dbReference>
<dbReference type="SMART" id="SM00389">
    <property type="entry name" value="HOX"/>
    <property type="match status" value="1"/>
</dbReference>
<dbReference type="SUPFAM" id="SSF46689">
    <property type="entry name" value="Homeodomain-like"/>
    <property type="match status" value="1"/>
</dbReference>
<dbReference type="PROSITE" id="PS00032">
    <property type="entry name" value="ANTENNAPEDIA"/>
    <property type="match status" value="1"/>
</dbReference>
<dbReference type="PROSITE" id="PS00027">
    <property type="entry name" value="HOMEOBOX_1"/>
    <property type="match status" value="1"/>
</dbReference>
<dbReference type="PROSITE" id="PS50071">
    <property type="entry name" value="HOMEOBOX_2"/>
    <property type="match status" value="1"/>
</dbReference>
<organism>
    <name type="scientific">Morone saxatilis</name>
    <name type="common">Striped bass</name>
    <name type="synonym">Perca saxatilis</name>
    <dbReference type="NCBI Taxonomy" id="34816"/>
    <lineage>
        <taxon>Eukaryota</taxon>
        <taxon>Metazoa</taxon>
        <taxon>Chordata</taxon>
        <taxon>Craniata</taxon>
        <taxon>Vertebrata</taxon>
        <taxon>Euteleostomi</taxon>
        <taxon>Actinopterygii</taxon>
        <taxon>Neopterygii</taxon>
        <taxon>Teleostei</taxon>
        <taxon>Neoteleostei</taxon>
        <taxon>Acanthomorphata</taxon>
        <taxon>Eupercaria</taxon>
        <taxon>Moronidae</taxon>
        <taxon>Morone</taxon>
    </lineage>
</organism>
<gene>
    <name type="primary">hoxa5</name>
</gene>
<sequence>MSSYFVNSFCGRYPNGADFQLHNYGDHSTANDQYRDSTAMHSSRYGYGYNGMDLTVGRAGTGHFVGNERTQGYSPSHSAATTPSVEPVRYTQSANSTGTSSLSPPPDPLPCSSVASSSPVTETQSQHRAVKNSITTPCSTPCSSSNGGTLLLNRDCVSKASPLEEEKPAGSAPTTPQNVSDSTQPQIYPWMRKLHINHDLAGPEGKRARTAYTRYQTLELEKEFHFNRYLTRRRRIEIAHALCLSERQIKIWFQNRRMKWKKDNKLKSMNMAAAGGGGYRP</sequence>
<feature type="chain" id="PRO_0000200064" description="Homeobox protein Hox-A5">
    <location>
        <begin position="1"/>
        <end position="281"/>
    </location>
</feature>
<feature type="DNA-binding region" description="Homeobox" evidence="2">
    <location>
        <begin position="205"/>
        <end position="264"/>
    </location>
</feature>
<feature type="region of interest" description="Disordered" evidence="3">
    <location>
        <begin position="65"/>
        <end position="144"/>
    </location>
</feature>
<feature type="region of interest" description="Disordered" evidence="3">
    <location>
        <begin position="162"/>
        <end position="183"/>
    </location>
</feature>
<feature type="short sequence motif" description="Antp-type hexapeptide">
    <location>
        <begin position="187"/>
        <end position="192"/>
    </location>
</feature>
<feature type="compositionally biased region" description="Polar residues" evidence="3">
    <location>
        <begin position="68"/>
        <end position="99"/>
    </location>
</feature>
<feature type="compositionally biased region" description="Polar residues" evidence="3">
    <location>
        <begin position="114"/>
        <end position="127"/>
    </location>
</feature>
<feature type="compositionally biased region" description="Low complexity" evidence="3">
    <location>
        <begin position="132"/>
        <end position="144"/>
    </location>
</feature>
<feature type="compositionally biased region" description="Polar residues" evidence="3">
    <location>
        <begin position="172"/>
        <end position="183"/>
    </location>
</feature>
<proteinExistence type="inferred from homology"/>
<reference key="1">
    <citation type="journal article" date="1999" name="J. Exp. Zool.">
        <title>Genomic organization of the Hoxa4-Hoxa10 region from Morone saxatilis: implications for Hox gene evolution among vertebrates.</title>
        <authorList>
            <person name="Snell E.A."/>
            <person name="Scemama J.L."/>
            <person name="Stellwag E.J."/>
        </authorList>
    </citation>
    <scope>NUCLEOTIDE SEQUENCE [GENOMIC DNA]</scope>
</reference>
<keyword id="KW-0217">Developmental protein</keyword>
<keyword id="KW-0238">DNA-binding</keyword>
<keyword id="KW-0371">Homeobox</keyword>
<keyword id="KW-0539">Nucleus</keyword>
<keyword id="KW-0804">Transcription</keyword>
<keyword id="KW-0805">Transcription regulation</keyword>